<feature type="chain" id="PRO_0000301556" description="Aspartate carbamoyltransferase catalytic subunit">
    <location>
        <begin position="1"/>
        <end position="321"/>
    </location>
</feature>
<feature type="binding site" evidence="1">
    <location>
        <position position="65"/>
    </location>
    <ligand>
        <name>carbamoyl phosphate</name>
        <dbReference type="ChEBI" id="CHEBI:58228"/>
    </ligand>
</feature>
<feature type="binding site" evidence="1">
    <location>
        <position position="66"/>
    </location>
    <ligand>
        <name>carbamoyl phosphate</name>
        <dbReference type="ChEBI" id="CHEBI:58228"/>
    </ligand>
</feature>
<feature type="binding site" evidence="1">
    <location>
        <position position="93"/>
    </location>
    <ligand>
        <name>L-aspartate</name>
        <dbReference type="ChEBI" id="CHEBI:29991"/>
    </ligand>
</feature>
<feature type="binding site" evidence="1">
    <location>
        <position position="115"/>
    </location>
    <ligand>
        <name>carbamoyl phosphate</name>
        <dbReference type="ChEBI" id="CHEBI:58228"/>
    </ligand>
</feature>
<feature type="binding site" evidence="1">
    <location>
        <position position="143"/>
    </location>
    <ligand>
        <name>carbamoyl phosphate</name>
        <dbReference type="ChEBI" id="CHEBI:58228"/>
    </ligand>
</feature>
<feature type="binding site" evidence="1">
    <location>
        <position position="146"/>
    </location>
    <ligand>
        <name>carbamoyl phosphate</name>
        <dbReference type="ChEBI" id="CHEBI:58228"/>
    </ligand>
</feature>
<feature type="binding site" evidence="1">
    <location>
        <position position="176"/>
    </location>
    <ligand>
        <name>L-aspartate</name>
        <dbReference type="ChEBI" id="CHEBI:29991"/>
    </ligand>
</feature>
<feature type="binding site" evidence="1">
    <location>
        <position position="230"/>
    </location>
    <ligand>
        <name>L-aspartate</name>
        <dbReference type="ChEBI" id="CHEBI:29991"/>
    </ligand>
</feature>
<feature type="binding site" evidence="1">
    <location>
        <position position="271"/>
    </location>
    <ligand>
        <name>carbamoyl phosphate</name>
        <dbReference type="ChEBI" id="CHEBI:58228"/>
    </ligand>
</feature>
<feature type="binding site" evidence="1">
    <location>
        <position position="272"/>
    </location>
    <ligand>
        <name>carbamoyl phosphate</name>
        <dbReference type="ChEBI" id="CHEBI:58228"/>
    </ligand>
</feature>
<gene>
    <name evidence="1" type="primary">pyrB</name>
    <name type="ordered locus">BARBAKC583_0839</name>
</gene>
<evidence type="ECO:0000255" key="1">
    <source>
        <dbReference type="HAMAP-Rule" id="MF_00001"/>
    </source>
</evidence>
<comment type="function">
    <text evidence="1">Catalyzes the condensation of carbamoyl phosphate and aspartate to form carbamoyl aspartate and inorganic phosphate, the committed step in the de novo pyrimidine nucleotide biosynthesis pathway.</text>
</comment>
<comment type="catalytic activity">
    <reaction evidence="1">
        <text>carbamoyl phosphate + L-aspartate = N-carbamoyl-L-aspartate + phosphate + H(+)</text>
        <dbReference type="Rhea" id="RHEA:20013"/>
        <dbReference type="ChEBI" id="CHEBI:15378"/>
        <dbReference type="ChEBI" id="CHEBI:29991"/>
        <dbReference type="ChEBI" id="CHEBI:32814"/>
        <dbReference type="ChEBI" id="CHEBI:43474"/>
        <dbReference type="ChEBI" id="CHEBI:58228"/>
        <dbReference type="EC" id="2.1.3.2"/>
    </reaction>
</comment>
<comment type="pathway">
    <text evidence="1">Pyrimidine metabolism; UMP biosynthesis via de novo pathway; (S)-dihydroorotate from bicarbonate: step 2/3.</text>
</comment>
<comment type="subunit">
    <text evidence="1">Heterododecamer (2C3:3R2) of six catalytic PyrB chains organized as two trimers (C3), and six regulatory PyrI chains organized as three dimers (R2).</text>
</comment>
<comment type="similarity">
    <text evidence="1">Belongs to the aspartate/ornithine carbamoyltransferase superfamily. ATCase family.</text>
</comment>
<dbReference type="EC" id="2.1.3.2" evidence="1"/>
<dbReference type="EMBL" id="CP000524">
    <property type="protein sequence ID" value="ABM44756.1"/>
    <property type="molecule type" value="Genomic_DNA"/>
</dbReference>
<dbReference type="RefSeq" id="WP_005767192.1">
    <property type="nucleotide sequence ID" value="NC_008783.1"/>
</dbReference>
<dbReference type="SMR" id="A1UT24"/>
<dbReference type="STRING" id="360095.BARBAKC583_0839"/>
<dbReference type="GeneID" id="4685106"/>
<dbReference type="KEGG" id="bbk:BARBAKC583_0839"/>
<dbReference type="PATRIC" id="fig|360095.6.peg.815"/>
<dbReference type="eggNOG" id="COG0540">
    <property type="taxonomic scope" value="Bacteria"/>
</dbReference>
<dbReference type="HOGENOM" id="CLU_043846_2_0_5"/>
<dbReference type="OrthoDB" id="9774690at2"/>
<dbReference type="UniPathway" id="UPA00070">
    <property type="reaction ID" value="UER00116"/>
</dbReference>
<dbReference type="Proteomes" id="UP000000643">
    <property type="component" value="Chromosome"/>
</dbReference>
<dbReference type="GO" id="GO:0005829">
    <property type="term" value="C:cytosol"/>
    <property type="evidence" value="ECO:0007669"/>
    <property type="project" value="TreeGrafter"/>
</dbReference>
<dbReference type="GO" id="GO:0016597">
    <property type="term" value="F:amino acid binding"/>
    <property type="evidence" value="ECO:0007669"/>
    <property type="project" value="InterPro"/>
</dbReference>
<dbReference type="GO" id="GO:0004070">
    <property type="term" value="F:aspartate carbamoyltransferase activity"/>
    <property type="evidence" value="ECO:0007669"/>
    <property type="project" value="UniProtKB-UniRule"/>
</dbReference>
<dbReference type="GO" id="GO:0006207">
    <property type="term" value="P:'de novo' pyrimidine nucleobase biosynthetic process"/>
    <property type="evidence" value="ECO:0007669"/>
    <property type="project" value="InterPro"/>
</dbReference>
<dbReference type="GO" id="GO:0044205">
    <property type="term" value="P:'de novo' UMP biosynthetic process"/>
    <property type="evidence" value="ECO:0007669"/>
    <property type="project" value="UniProtKB-UniRule"/>
</dbReference>
<dbReference type="GO" id="GO:0006520">
    <property type="term" value="P:amino acid metabolic process"/>
    <property type="evidence" value="ECO:0007669"/>
    <property type="project" value="InterPro"/>
</dbReference>
<dbReference type="FunFam" id="3.40.50.1370:FF:000007">
    <property type="entry name" value="Aspartate carbamoyltransferase"/>
    <property type="match status" value="1"/>
</dbReference>
<dbReference type="Gene3D" id="3.40.50.1370">
    <property type="entry name" value="Aspartate/ornithine carbamoyltransferase"/>
    <property type="match status" value="2"/>
</dbReference>
<dbReference type="HAMAP" id="MF_00001">
    <property type="entry name" value="Asp_carb_tr"/>
    <property type="match status" value="1"/>
</dbReference>
<dbReference type="InterPro" id="IPR006132">
    <property type="entry name" value="Asp/Orn_carbamoyltranf_P-bd"/>
</dbReference>
<dbReference type="InterPro" id="IPR006130">
    <property type="entry name" value="Asp/Orn_carbamoylTrfase"/>
</dbReference>
<dbReference type="InterPro" id="IPR036901">
    <property type="entry name" value="Asp/Orn_carbamoylTrfase_sf"/>
</dbReference>
<dbReference type="InterPro" id="IPR002082">
    <property type="entry name" value="Asp_carbamoyltransf"/>
</dbReference>
<dbReference type="InterPro" id="IPR006131">
    <property type="entry name" value="Asp_carbamoyltransf_Asp/Orn-bd"/>
</dbReference>
<dbReference type="NCBIfam" id="TIGR00670">
    <property type="entry name" value="asp_carb_tr"/>
    <property type="match status" value="1"/>
</dbReference>
<dbReference type="NCBIfam" id="NF002032">
    <property type="entry name" value="PRK00856.1"/>
    <property type="match status" value="1"/>
</dbReference>
<dbReference type="PANTHER" id="PTHR45753:SF6">
    <property type="entry name" value="ASPARTATE CARBAMOYLTRANSFERASE"/>
    <property type="match status" value="1"/>
</dbReference>
<dbReference type="PANTHER" id="PTHR45753">
    <property type="entry name" value="ORNITHINE CARBAMOYLTRANSFERASE, MITOCHONDRIAL"/>
    <property type="match status" value="1"/>
</dbReference>
<dbReference type="Pfam" id="PF00185">
    <property type="entry name" value="OTCace"/>
    <property type="match status" value="1"/>
</dbReference>
<dbReference type="Pfam" id="PF02729">
    <property type="entry name" value="OTCace_N"/>
    <property type="match status" value="1"/>
</dbReference>
<dbReference type="PRINTS" id="PR00100">
    <property type="entry name" value="AOTCASE"/>
</dbReference>
<dbReference type="PRINTS" id="PR00101">
    <property type="entry name" value="ATCASE"/>
</dbReference>
<dbReference type="SUPFAM" id="SSF53671">
    <property type="entry name" value="Aspartate/ornithine carbamoyltransferase"/>
    <property type="match status" value="1"/>
</dbReference>
<dbReference type="PROSITE" id="PS00097">
    <property type="entry name" value="CARBAMOYLTRANSFERASE"/>
    <property type="match status" value="1"/>
</dbReference>
<keyword id="KW-0665">Pyrimidine biosynthesis</keyword>
<keyword id="KW-0808">Transferase</keyword>
<organism>
    <name type="scientific">Bartonella bacilliformis (strain ATCC 35685 / KC583 / Herrer 020/F12,63)</name>
    <dbReference type="NCBI Taxonomy" id="360095"/>
    <lineage>
        <taxon>Bacteria</taxon>
        <taxon>Pseudomonadati</taxon>
        <taxon>Pseudomonadota</taxon>
        <taxon>Alphaproteobacteria</taxon>
        <taxon>Hyphomicrobiales</taxon>
        <taxon>Bartonellaceae</taxon>
        <taxon>Bartonella</taxon>
    </lineage>
</organism>
<proteinExistence type="inferred from homology"/>
<sequence length="321" mass="35375">MTQNTPFPIFPHRHLLGIKGLTLQDLTTLLDRADANVTLYQKNDKKKSILHGRTQINLFFESSTRTQSSFELAGKRLGADVMNMIISNSSVKKGETLIDTATTLNAMNPDILVIRHNCAGAASLLAQKIDCCVINAGDGAHEHPTQALLDALTIRRTKGRIEGLTVAICGDILHSRVARSNIISLNTLGARVRVVAPSTLLPTGIEDMGVEVFHTMQEGLKGADVVMMLRLQLERMTGAFIPSIREYFYHFGLHKENLIYAKNDCIIMHPGPINRGVEIASDIADGTRSMIHTQVEMGIAVRMAIMEALLDPRHDYNGEKK</sequence>
<protein>
    <recommendedName>
        <fullName evidence="1">Aspartate carbamoyltransferase catalytic subunit</fullName>
        <ecNumber evidence="1">2.1.3.2</ecNumber>
    </recommendedName>
    <alternativeName>
        <fullName evidence="1">Aspartate transcarbamylase</fullName>
        <shortName evidence="1">ATCase</shortName>
    </alternativeName>
</protein>
<accession>A1UT24</accession>
<reference key="1">
    <citation type="submission" date="2006-12" db="EMBL/GenBank/DDBJ databases">
        <authorList>
            <person name="Hendrix L."/>
            <person name="Mohamoud Y."/>
            <person name="Radune D."/>
            <person name="Shvartsbeyn A."/>
            <person name="Daugherty S."/>
            <person name="Dodson R."/>
            <person name="Durkin A.S."/>
            <person name="Harkins D."/>
            <person name="Huot H."/>
            <person name="Kothari S.P."/>
            <person name="Madupu R."/>
            <person name="Li J."/>
            <person name="Nelson W.C."/>
            <person name="Shrivastava S."/>
            <person name="Giglio M.G."/>
            <person name="Haft D."/>
            <person name="Selengut J."/>
            <person name="Fraser-Ligget C."/>
            <person name="Seshadri R."/>
        </authorList>
    </citation>
    <scope>NUCLEOTIDE SEQUENCE [LARGE SCALE GENOMIC DNA]</scope>
    <source>
        <strain>ATCC 35685 / KC583 / Herrer 020/F12,63</strain>
    </source>
</reference>
<name>PYRB_BARBK</name>